<dbReference type="EC" id="1.17.7.4" evidence="1"/>
<dbReference type="EMBL" id="CP000057">
    <property type="protein sequence ID" value="AAX88042.1"/>
    <property type="molecule type" value="Genomic_DNA"/>
</dbReference>
<dbReference type="RefSeq" id="WP_005659294.1">
    <property type="nucleotide sequence ID" value="NC_007146.2"/>
</dbReference>
<dbReference type="SMR" id="Q4QLQ5"/>
<dbReference type="GeneID" id="93220041"/>
<dbReference type="KEGG" id="hit:NTHI1182"/>
<dbReference type="HOGENOM" id="CLU_027486_1_0_6"/>
<dbReference type="UniPathway" id="UPA00056">
    <property type="reaction ID" value="UER00097"/>
</dbReference>
<dbReference type="UniPathway" id="UPA00059">
    <property type="reaction ID" value="UER00105"/>
</dbReference>
<dbReference type="Proteomes" id="UP000002525">
    <property type="component" value="Chromosome"/>
</dbReference>
<dbReference type="GO" id="GO:0051539">
    <property type="term" value="F:4 iron, 4 sulfur cluster binding"/>
    <property type="evidence" value="ECO:0007669"/>
    <property type="project" value="UniProtKB-UniRule"/>
</dbReference>
<dbReference type="GO" id="GO:0051745">
    <property type="term" value="F:4-hydroxy-3-methylbut-2-enyl diphosphate reductase activity"/>
    <property type="evidence" value="ECO:0007669"/>
    <property type="project" value="UniProtKB-UniRule"/>
</dbReference>
<dbReference type="GO" id="GO:0046872">
    <property type="term" value="F:metal ion binding"/>
    <property type="evidence" value="ECO:0007669"/>
    <property type="project" value="UniProtKB-KW"/>
</dbReference>
<dbReference type="GO" id="GO:0050992">
    <property type="term" value="P:dimethylallyl diphosphate biosynthetic process"/>
    <property type="evidence" value="ECO:0007669"/>
    <property type="project" value="UniProtKB-UniRule"/>
</dbReference>
<dbReference type="GO" id="GO:0019288">
    <property type="term" value="P:isopentenyl diphosphate biosynthetic process, methylerythritol 4-phosphate pathway"/>
    <property type="evidence" value="ECO:0007669"/>
    <property type="project" value="UniProtKB-UniRule"/>
</dbReference>
<dbReference type="GO" id="GO:0016114">
    <property type="term" value="P:terpenoid biosynthetic process"/>
    <property type="evidence" value="ECO:0007669"/>
    <property type="project" value="UniProtKB-UniRule"/>
</dbReference>
<dbReference type="CDD" id="cd13944">
    <property type="entry name" value="lytB_ispH"/>
    <property type="match status" value="1"/>
</dbReference>
<dbReference type="Gene3D" id="3.40.50.11270">
    <property type="match status" value="1"/>
</dbReference>
<dbReference type="Gene3D" id="3.40.1010.20">
    <property type="entry name" value="4-hydroxy-3-methylbut-2-enyl diphosphate reductase, catalytic domain"/>
    <property type="match status" value="2"/>
</dbReference>
<dbReference type="HAMAP" id="MF_00191">
    <property type="entry name" value="IspH"/>
    <property type="match status" value="1"/>
</dbReference>
<dbReference type="InterPro" id="IPR003451">
    <property type="entry name" value="LytB/IspH"/>
</dbReference>
<dbReference type="NCBIfam" id="TIGR00216">
    <property type="entry name" value="ispH_lytB"/>
    <property type="match status" value="1"/>
</dbReference>
<dbReference type="NCBIfam" id="NF002188">
    <property type="entry name" value="PRK01045.1-2"/>
    <property type="match status" value="1"/>
</dbReference>
<dbReference type="NCBIfam" id="NF002190">
    <property type="entry name" value="PRK01045.1-4"/>
    <property type="match status" value="1"/>
</dbReference>
<dbReference type="PANTHER" id="PTHR30426">
    <property type="entry name" value="4-HYDROXY-3-METHYLBUT-2-ENYL DIPHOSPHATE REDUCTASE"/>
    <property type="match status" value="1"/>
</dbReference>
<dbReference type="PANTHER" id="PTHR30426:SF0">
    <property type="entry name" value="4-HYDROXY-3-METHYLBUT-2-ENYL DIPHOSPHATE REDUCTASE"/>
    <property type="match status" value="1"/>
</dbReference>
<dbReference type="Pfam" id="PF02401">
    <property type="entry name" value="LYTB"/>
    <property type="match status" value="1"/>
</dbReference>
<comment type="function">
    <text evidence="1">Catalyzes the conversion of 1-hydroxy-2-methyl-2-(E)-butenyl 4-diphosphate (HMBPP) into a mixture of isopentenyl diphosphate (IPP) and dimethylallyl diphosphate (DMAPP). Acts in the terminal step of the DOXP/MEP pathway for isoprenoid precursor biosynthesis.</text>
</comment>
<comment type="catalytic activity">
    <reaction evidence="1">
        <text>isopentenyl diphosphate + 2 oxidized [2Fe-2S]-[ferredoxin] + H2O = (2E)-4-hydroxy-3-methylbut-2-enyl diphosphate + 2 reduced [2Fe-2S]-[ferredoxin] + 2 H(+)</text>
        <dbReference type="Rhea" id="RHEA:24488"/>
        <dbReference type="Rhea" id="RHEA-COMP:10000"/>
        <dbReference type="Rhea" id="RHEA-COMP:10001"/>
        <dbReference type="ChEBI" id="CHEBI:15377"/>
        <dbReference type="ChEBI" id="CHEBI:15378"/>
        <dbReference type="ChEBI" id="CHEBI:33737"/>
        <dbReference type="ChEBI" id="CHEBI:33738"/>
        <dbReference type="ChEBI" id="CHEBI:128753"/>
        <dbReference type="ChEBI" id="CHEBI:128769"/>
        <dbReference type="EC" id="1.17.7.4"/>
    </reaction>
</comment>
<comment type="catalytic activity">
    <reaction evidence="1">
        <text>dimethylallyl diphosphate + 2 oxidized [2Fe-2S]-[ferredoxin] + H2O = (2E)-4-hydroxy-3-methylbut-2-enyl diphosphate + 2 reduced [2Fe-2S]-[ferredoxin] + 2 H(+)</text>
        <dbReference type="Rhea" id="RHEA:24825"/>
        <dbReference type="Rhea" id="RHEA-COMP:10000"/>
        <dbReference type="Rhea" id="RHEA-COMP:10001"/>
        <dbReference type="ChEBI" id="CHEBI:15377"/>
        <dbReference type="ChEBI" id="CHEBI:15378"/>
        <dbReference type="ChEBI" id="CHEBI:33737"/>
        <dbReference type="ChEBI" id="CHEBI:33738"/>
        <dbReference type="ChEBI" id="CHEBI:57623"/>
        <dbReference type="ChEBI" id="CHEBI:128753"/>
        <dbReference type="EC" id="1.17.7.4"/>
    </reaction>
</comment>
<comment type="cofactor">
    <cofactor evidence="1">
        <name>[4Fe-4S] cluster</name>
        <dbReference type="ChEBI" id="CHEBI:49883"/>
    </cofactor>
    <text evidence="1">Binds 1 [4Fe-4S] cluster per subunit.</text>
</comment>
<comment type="pathway">
    <text evidence="1">Isoprenoid biosynthesis; dimethylallyl diphosphate biosynthesis; dimethylallyl diphosphate from (2E)-4-hydroxy-3-methylbutenyl diphosphate: step 1/1.</text>
</comment>
<comment type="pathway">
    <text evidence="1">Isoprenoid biosynthesis; isopentenyl diphosphate biosynthesis via DXP pathway; isopentenyl diphosphate from 1-deoxy-D-xylulose 5-phosphate: step 6/6.</text>
</comment>
<comment type="similarity">
    <text evidence="1">Belongs to the IspH family.</text>
</comment>
<sequence>MKIILANPRGFCAGVDRAISIVELALEIHGAPIYVRHEVVHNRFVVNGLRDRGAIFVEELSEVPDGAIVIFSAHGVSQAVRQEAKDRNLKVFDATCPLVTKVHMQVARASRKGTKAILIGHKGHPEVEGTMGQYSNEDGGIFLIEKVEDIARLPMQDNDDLTFMTQTTLSLDDTAETIAALKEKYPAIQGPHKNDICYATTNRQEAVRELAKLSDLVLVVGSKNSSNSNRLAELASRMGIKSQLLDDPSDIQDDWFNDVKTIGITAGASAPEELVQSIISRLKEFGADTIEELQGLEENMFFEVPKELRIKEVN</sequence>
<keyword id="KW-0004">4Fe-4S</keyword>
<keyword id="KW-0408">Iron</keyword>
<keyword id="KW-0411">Iron-sulfur</keyword>
<keyword id="KW-0414">Isoprene biosynthesis</keyword>
<keyword id="KW-0479">Metal-binding</keyword>
<keyword id="KW-0560">Oxidoreductase</keyword>
<organism>
    <name type="scientific">Haemophilus influenzae (strain 86-028NP)</name>
    <dbReference type="NCBI Taxonomy" id="281310"/>
    <lineage>
        <taxon>Bacteria</taxon>
        <taxon>Pseudomonadati</taxon>
        <taxon>Pseudomonadota</taxon>
        <taxon>Gammaproteobacteria</taxon>
        <taxon>Pasteurellales</taxon>
        <taxon>Pasteurellaceae</taxon>
        <taxon>Haemophilus</taxon>
    </lineage>
</organism>
<accession>Q4QLQ5</accession>
<name>ISPH_HAEI8</name>
<reference key="1">
    <citation type="journal article" date="2005" name="J. Bacteriol.">
        <title>Genomic sequence of an otitis media isolate of nontypeable Haemophilus influenzae: comparative study with H. influenzae serotype d, strain KW20.</title>
        <authorList>
            <person name="Harrison A."/>
            <person name="Dyer D.W."/>
            <person name="Gillaspy A."/>
            <person name="Ray W.C."/>
            <person name="Mungur R."/>
            <person name="Carson M.B."/>
            <person name="Zhong H."/>
            <person name="Gipson J."/>
            <person name="Gipson M."/>
            <person name="Johnson L.S."/>
            <person name="Lewis L."/>
            <person name="Bakaletz L.O."/>
            <person name="Munson R.S. Jr."/>
        </authorList>
    </citation>
    <scope>NUCLEOTIDE SEQUENCE [LARGE SCALE GENOMIC DNA]</scope>
    <source>
        <strain>86-028NP</strain>
    </source>
</reference>
<protein>
    <recommendedName>
        <fullName evidence="1">4-hydroxy-3-methylbut-2-enyl diphosphate reductase</fullName>
        <shortName evidence="1">HMBPP reductase</shortName>
        <ecNumber evidence="1">1.17.7.4</ecNumber>
    </recommendedName>
</protein>
<evidence type="ECO:0000255" key="1">
    <source>
        <dbReference type="HAMAP-Rule" id="MF_00191"/>
    </source>
</evidence>
<proteinExistence type="inferred from homology"/>
<feature type="chain" id="PRO_1000021128" description="4-hydroxy-3-methylbut-2-enyl diphosphate reductase">
    <location>
        <begin position="1"/>
        <end position="314"/>
    </location>
</feature>
<feature type="active site" description="Proton donor" evidence="1">
    <location>
        <position position="126"/>
    </location>
</feature>
<feature type="binding site" evidence="1">
    <location>
        <position position="12"/>
    </location>
    <ligand>
        <name>[4Fe-4S] cluster</name>
        <dbReference type="ChEBI" id="CHEBI:49883"/>
    </ligand>
</feature>
<feature type="binding site" evidence="1">
    <location>
        <position position="41"/>
    </location>
    <ligand>
        <name>(2E)-4-hydroxy-3-methylbut-2-enyl diphosphate</name>
        <dbReference type="ChEBI" id="CHEBI:128753"/>
    </ligand>
</feature>
<feature type="binding site" evidence="1">
    <location>
        <position position="41"/>
    </location>
    <ligand>
        <name>dimethylallyl diphosphate</name>
        <dbReference type="ChEBI" id="CHEBI:57623"/>
    </ligand>
</feature>
<feature type="binding site" evidence="1">
    <location>
        <position position="41"/>
    </location>
    <ligand>
        <name>isopentenyl diphosphate</name>
        <dbReference type="ChEBI" id="CHEBI:128769"/>
    </ligand>
</feature>
<feature type="binding site" evidence="1">
    <location>
        <position position="74"/>
    </location>
    <ligand>
        <name>(2E)-4-hydroxy-3-methylbut-2-enyl diphosphate</name>
        <dbReference type="ChEBI" id="CHEBI:128753"/>
    </ligand>
</feature>
<feature type="binding site" evidence="1">
    <location>
        <position position="74"/>
    </location>
    <ligand>
        <name>dimethylallyl diphosphate</name>
        <dbReference type="ChEBI" id="CHEBI:57623"/>
    </ligand>
</feature>
<feature type="binding site" evidence="1">
    <location>
        <position position="74"/>
    </location>
    <ligand>
        <name>isopentenyl diphosphate</name>
        <dbReference type="ChEBI" id="CHEBI:128769"/>
    </ligand>
</feature>
<feature type="binding site" evidence="1">
    <location>
        <position position="96"/>
    </location>
    <ligand>
        <name>[4Fe-4S] cluster</name>
        <dbReference type="ChEBI" id="CHEBI:49883"/>
    </ligand>
</feature>
<feature type="binding site" evidence="1">
    <location>
        <position position="124"/>
    </location>
    <ligand>
        <name>(2E)-4-hydroxy-3-methylbut-2-enyl diphosphate</name>
        <dbReference type="ChEBI" id="CHEBI:128753"/>
    </ligand>
</feature>
<feature type="binding site" evidence="1">
    <location>
        <position position="124"/>
    </location>
    <ligand>
        <name>dimethylallyl diphosphate</name>
        <dbReference type="ChEBI" id="CHEBI:57623"/>
    </ligand>
</feature>
<feature type="binding site" evidence="1">
    <location>
        <position position="124"/>
    </location>
    <ligand>
        <name>isopentenyl diphosphate</name>
        <dbReference type="ChEBI" id="CHEBI:128769"/>
    </ligand>
</feature>
<feature type="binding site" evidence="1">
    <location>
        <position position="167"/>
    </location>
    <ligand>
        <name>(2E)-4-hydroxy-3-methylbut-2-enyl diphosphate</name>
        <dbReference type="ChEBI" id="CHEBI:128753"/>
    </ligand>
</feature>
<feature type="binding site" evidence="1">
    <location>
        <position position="197"/>
    </location>
    <ligand>
        <name>[4Fe-4S] cluster</name>
        <dbReference type="ChEBI" id="CHEBI:49883"/>
    </ligand>
</feature>
<feature type="binding site" evidence="1">
    <location>
        <position position="225"/>
    </location>
    <ligand>
        <name>(2E)-4-hydroxy-3-methylbut-2-enyl diphosphate</name>
        <dbReference type="ChEBI" id="CHEBI:128753"/>
    </ligand>
</feature>
<feature type="binding site" evidence="1">
    <location>
        <position position="225"/>
    </location>
    <ligand>
        <name>dimethylallyl diphosphate</name>
        <dbReference type="ChEBI" id="CHEBI:57623"/>
    </ligand>
</feature>
<feature type="binding site" evidence="1">
    <location>
        <position position="225"/>
    </location>
    <ligand>
        <name>isopentenyl diphosphate</name>
        <dbReference type="ChEBI" id="CHEBI:128769"/>
    </ligand>
</feature>
<feature type="binding site" evidence="1">
    <location>
        <position position="226"/>
    </location>
    <ligand>
        <name>(2E)-4-hydroxy-3-methylbut-2-enyl diphosphate</name>
        <dbReference type="ChEBI" id="CHEBI:128753"/>
    </ligand>
</feature>
<feature type="binding site" evidence="1">
    <location>
        <position position="226"/>
    </location>
    <ligand>
        <name>dimethylallyl diphosphate</name>
        <dbReference type="ChEBI" id="CHEBI:57623"/>
    </ligand>
</feature>
<feature type="binding site" evidence="1">
    <location>
        <position position="226"/>
    </location>
    <ligand>
        <name>isopentenyl diphosphate</name>
        <dbReference type="ChEBI" id="CHEBI:128769"/>
    </ligand>
</feature>
<feature type="binding site" evidence="1">
    <location>
        <position position="227"/>
    </location>
    <ligand>
        <name>(2E)-4-hydroxy-3-methylbut-2-enyl diphosphate</name>
        <dbReference type="ChEBI" id="CHEBI:128753"/>
    </ligand>
</feature>
<feature type="binding site" evidence="1">
    <location>
        <position position="227"/>
    </location>
    <ligand>
        <name>dimethylallyl diphosphate</name>
        <dbReference type="ChEBI" id="CHEBI:57623"/>
    </ligand>
</feature>
<feature type="binding site" evidence="1">
    <location>
        <position position="227"/>
    </location>
    <ligand>
        <name>isopentenyl diphosphate</name>
        <dbReference type="ChEBI" id="CHEBI:128769"/>
    </ligand>
</feature>
<feature type="binding site" evidence="1">
    <location>
        <position position="269"/>
    </location>
    <ligand>
        <name>(2E)-4-hydroxy-3-methylbut-2-enyl diphosphate</name>
        <dbReference type="ChEBI" id="CHEBI:128753"/>
    </ligand>
</feature>
<feature type="binding site" evidence="1">
    <location>
        <position position="269"/>
    </location>
    <ligand>
        <name>dimethylallyl diphosphate</name>
        <dbReference type="ChEBI" id="CHEBI:57623"/>
    </ligand>
</feature>
<feature type="binding site" evidence="1">
    <location>
        <position position="269"/>
    </location>
    <ligand>
        <name>isopentenyl diphosphate</name>
        <dbReference type="ChEBI" id="CHEBI:128769"/>
    </ligand>
</feature>
<gene>
    <name evidence="1" type="primary">ispH</name>
    <name type="ordered locus">NTHI1182</name>
</gene>